<feature type="chain" id="PRO_1000192783" description="Cytochrome b6-f complex subunit 5">
    <location>
        <begin position="1"/>
        <end position="38"/>
    </location>
</feature>
<feature type="transmembrane region" description="Helical" evidence="1">
    <location>
        <begin position="5"/>
        <end position="25"/>
    </location>
</feature>
<gene>
    <name evidence="1" type="primary">petG</name>
    <name type="ordered locus">PCC7424_3663</name>
</gene>
<reference key="1">
    <citation type="journal article" date="2011" name="MBio">
        <title>Novel metabolic attributes of the genus Cyanothece, comprising a group of unicellular nitrogen-fixing Cyanobacteria.</title>
        <authorList>
            <person name="Bandyopadhyay A."/>
            <person name="Elvitigala T."/>
            <person name="Welsh E."/>
            <person name="Stockel J."/>
            <person name="Liberton M."/>
            <person name="Min H."/>
            <person name="Sherman L.A."/>
            <person name="Pakrasi H.B."/>
        </authorList>
    </citation>
    <scope>NUCLEOTIDE SEQUENCE [LARGE SCALE GENOMIC DNA]</scope>
    <source>
        <strain>PCC 7424</strain>
    </source>
</reference>
<sequence length="38" mass="4145">MIEPLVLGLVMGLVPITLAGLFVAAYLQYKRGNQLNLD</sequence>
<comment type="function">
    <text evidence="1">Component of the cytochrome b6-f complex, which mediates electron transfer between photosystem II (PSII) and photosystem I (PSI), cyclic electron flow around PSI, and state transitions. PetG is required for either the stability or assembly of the cytochrome b6-f complex.</text>
</comment>
<comment type="subunit">
    <text evidence="1">The 4 large subunits of the cytochrome b6-f complex are cytochrome b6, subunit IV (17 kDa polypeptide, PetD), cytochrome f and the Rieske protein, while the 4 small subunits are PetG, PetL, PetM and PetN. The complex functions as a dimer.</text>
</comment>
<comment type="subcellular location">
    <subcellularLocation>
        <location evidence="1">Cellular thylakoid membrane</location>
        <topology evidence="1">Single-pass membrane protein</topology>
    </subcellularLocation>
</comment>
<comment type="similarity">
    <text evidence="1">Belongs to the PetG family.</text>
</comment>
<proteinExistence type="inferred from homology"/>
<dbReference type="EMBL" id="CP001291">
    <property type="protein sequence ID" value="ACK72046.1"/>
    <property type="molecule type" value="Genomic_DNA"/>
</dbReference>
<dbReference type="RefSeq" id="WP_015955639.1">
    <property type="nucleotide sequence ID" value="NC_011729.1"/>
</dbReference>
<dbReference type="SMR" id="B7KHU9"/>
<dbReference type="STRING" id="65393.PCC7424_3663"/>
<dbReference type="KEGG" id="cyc:PCC7424_3663"/>
<dbReference type="eggNOG" id="ENOG5033BE9">
    <property type="taxonomic scope" value="Bacteria"/>
</dbReference>
<dbReference type="HOGENOM" id="CLU_216962_0_0_3"/>
<dbReference type="Proteomes" id="UP000002384">
    <property type="component" value="Chromosome"/>
</dbReference>
<dbReference type="GO" id="GO:0009512">
    <property type="term" value="C:cytochrome b6f complex"/>
    <property type="evidence" value="ECO:0007669"/>
    <property type="project" value="InterPro"/>
</dbReference>
<dbReference type="GO" id="GO:0031676">
    <property type="term" value="C:plasma membrane-derived thylakoid membrane"/>
    <property type="evidence" value="ECO:0007669"/>
    <property type="project" value="UniProtKB-SubCell"/>
</dbReference>
<dbReference type="GO" id="GO:0045158">
    <property type="term" value="F:electron transporter, transferring electrons within cytochrome b6/f complex of photosystem II activity"/>
    <property type="evidence" value="ECO:0007669"/>
    <property type="project" value="UniProtKB-UniRule"/>
</dbReference>
<dbReference type="GO" id="GO:0017004">
    <property type="term" value="P:cytochrome complex assembly"/>
    <property type="evidence" value="ECO:0007669"/>
    <property type="project" value="UniProtKB-UniRule"/>
</dbReference>
<dbReference type="GO" id="GO:0015979">
    <property type="term" value="P:photosynthesis"/>
    <property type="evidence" value="ECO:0007669"/>
    <property type="project" value="UniProtKB-KW"/>
</dbReference>
<dbReference type="HAMAP" id="MF_00432">
    <property type="entry name" value="Cytb6_f_PetG"/>
    <property type="match status" value="1"/>
</dbReference>
<dbReference type="InterPro" id="IPR003683">
    <property type="entry name" value="Cyt_6/f_cplx_su5"/>
</dbReference>
<dbReference type="InterPro" id="IPR036099">
    <property type="entry name" value="Cyt_6/f_cplx_su5_sf"/>
</dbReference>
<dbReference type="NCBIfam" id="NF001907">
    <property type="entry name" value="PRK00665.1"/>
    <property type="match status" value="1"/>
</dbReference>
<dbReference type="Pfam" id="PF02529">
    <property type="entry name" value="PetG"/>
    <property type="match status" value="1"/>
</dbReference>
<dbReference type="PIRSF" id="PIRSF000034">
    <property type="entry name" value="Cyt_b6-f_V"/>
    <property type="match status" value="1"/>
</dbReference>
<dbReference type="SUPFAM" id="SSF103446">
    <property type="entry name" value="PetG subunit of the cytochrome b6f complex"/>
    <property type="match status" value="1"/>
</dbReference>
<evidence type="ECO:0000255" key="1">
    <source>
        <dbReference type="HAMAP-Rule" id="MF_00432"/>
    </source>
</evidence>
<organism>
    <name type="scientific">Gloeothece citriformis (strain PCC 7424)</name>
    <name type="common">Cyanothece sp. (strain PCC 7424)</name>
    <dbReference type="NCBI Taxonomy" id="65393"/>
    <lineage>
        <taxon>Bacteria</taxon>
        <taxon>Bacillati</taxon>
        <taxon>Cyanobacteriota</taxon>
        <taxon>Cyanophyceae</taxon>
        <taxon>Oscillatoriophycideae</taxon>
        <taxon>Chroococcales</taxon>
        <taxon>Aphanothecaceae</taxon>
        <taxon>Gloeothece</taxon>
        <taxon>Gloeothece citriformis</taxon>
    </lineage>
</organism>
<protein>
    <recommendedName>
        <fullName evidence="1">Cytochrome b6-f complex subunit 5</fullName>
    </recommendedName>
    <alternativeName>
        <fullName evidence="1">Cytochrome b6-f complex subunit PetG</fullName>
    </alternativeName>
    <alternativeName>
        <fullName evidence="1">Cytochrome b6-f complex subunit V</fullName>
    </alternativeName>
</protein>
<name>PETG_GLOC7</name>
<keyword id="KW-0249">Electron transport</keyword>
<keyword id="KW-0472">Membrane</keyword>
<keyword id="KW-0602">Photosynthesis</keyword>
<keyword id="KW-1185">Reference proteome</keyword>
<keyword id="KW-0793">Thylakoid</keyword>
<keyword id="KW-0812">Transmembrane</keyword>
<keyword id="KW-1133">Transmembrane helix</keyword>
<keyword id="KW-0813">Transport</keyword>
<accession>B7KHU9</accession>